<sequence>MLYMDDECQKLLAEKEAIIRELQEKVKELEAKLKSYEIREVYKGIIPDDVLEEFVKLPPEQMIIEIGRYLREKGSTGQVEAKKTVNDVRQEIASVEEEVSKAEKEIEKTISTITGAAKTKVGVDLTFTQKYDYEGSDVAFLAEDIMNAIGVKEGEYVSVKKNGTVNLRVLPYSKEGFIVVPTWVREKLGVKVNDFVEVVRR</sequence>
<protein>
    <recommendedName>
        <fullName>Uncharacterized protein AF_1504</fullName>
    </recommendedName>
</protein>
<organism>
    <name type="scientific">Archaeoglobus fulgidus (strain ATCC 49558 / DSM 4304 / JCM 9628 / NBRC 100126 / VC-16)</name>
    <dbReference type="NCBI Taxonomy" id="224325"/>
    <lineage>
        <taxon>Archaea</taxon>
        <taxon>Methanobacteriati</taxon>
        <taxon>Methanobacteriota</taxon>
        <taxon>Archaeoglobi</taxon>
        <taxon>Archaeoglobales</taxon>
        <taxon>Archaeoglobaceae</taxon>
        <taxon>Archaeoglobus</taxon>
    </lineage>
</organism>
<dbReference type="EMBL" id="AE000782">
    <property type="protein sequence ID" value="AAB89754.1"/>
    <property type="molecule type" value="Genomic_DNA"/>
</dbReference>
<dbReference type="PIR" id="G69437">
    <property type="entry name" value="G69437"/>
</dbReference>
<dbReference type="SMR" id="O28768"/>
<dbReference type="STRING" id="224325.AF_1504"/>
<dbReference type="PaxDb" id="224325-AF_1504"/>
<dbReference type="EnsemblBacteria" id="AAB89754">
    <property type="protein sequence ID" value="AAB89754"/>
    <property type="gene ID" value="AF_1504"/>
</dbReference>
<dbReference type="KEGG" id="afu:AF_1504"/>
<dbReference type="HOGENOM" id="CLU_1375445_0_0_2"/>
<dbReference type="Proteomes" id="UP000002199">
    <property type="component" value="Chromosome"/>
</dbReference>
<dbReference type="Gene3D" id="2.40.40.20">
    <property type="match status" value="1"/>
</dbReference>
<dbReference type="InterPro" id="IPR009010">
    <property type="entry name" value="Asp_de-COase-like_dom_sf"/>
</dbReference>
<dbReference type="SUPFAM" id="SSF50692">
    <property type="entry name" value="ADC-like"/>
    <property type="match status" value="1"/>
</dbReference>
<reference key="1">
    <citation type="journal article" date="1997" name="Nature">
        <title>The complete genome sequence of the hyperthermophilic, sulphate-reducing archaeon Archaeoglobus fulgidus.</title>
        <authorList>
            <person name="Klenk H.-P."/>
            <person name="Clayton R.A."/>
            <person name="Tomb J.-F."/>
            <person name="White O."/>
            <person name="Nelson K.E."/>
            <person name="Ketchum K.A."/>
            <person name="Dodson R.J."/>
            <person name="Gwinn M.L."/>
            <person name="Hickey E.K."/>
            <person name="Peterson J.D."/>
            <person name="Richardson D.L."/>
            <person name="Kerlavage A.R."/>
            <person name="Graham D.E."/>
            <person name="Kyrpides N.C."/>
            <person name="Fleischmann R.D."/>
            <person name="Quackenbush J."/>
            <person name="Lee N.H."/>
            <person name="Sutton G.G."/>
            <person name="Gill S.R."/>
            <person name="Kirkness E.F."/>
            <person name="Dougherty B.A."/>
            <person name="McKenney K."/>
            <person name="Adams M.D."/>
            <person name="Loftus B.J."/>
            <person name="Peterson S.N."/>
            <person name="Reich C.I."/>
            <person name="McNeil L.K."/>
            <person name="Badger J.H."/>
            <person name="Glodek A."/>
            <person name="Zhou L."/>
            <person name="Overbeek R."/>
            <person name="Gocayne J.D."/>
            <person name="Weidman J.F."/>
            <person name="McDonald L.A."/>
            <person name="Utterback T.R."/>
            <person name="Cotton M.D."/>
            <person name="Spriggs T."/>
            <person name="Artiach P."/>
            <person name="Kaine B.P."/>
            <person name="Sykes S.M."/>
            <person name="Sadow P.W."/>
            <person name="D'Andrea K.P."/>
            <person name="Bowman C."/>
            <person name="Fujii C."/>
            <person name="Garland S.A."/>
            <person name="Mason T.M."/>
            <person name="Olsen G.J."/>
            <person name="Fraser C.M."/>
            <person name="Smith H.O."/>
            <person name="Woese C.R."/>
            <person name="Venter J.C."/>
        </authorList>
    </citation>
    <scope>NUCLEOTIDE SEQUENCE [LARGE SCALE GENOMIC DNA]</scope>
    <source>
        <strain>ATCC 49558 / DSM 4304 / JCM 9628 / NBRC 100126 / VC-16</strain>
    </source>
</reference>
<name>Y1504_ARCFU</name>
<proteinExistence type="predicted"/>
<evidence type="ECO:0000255" key="1"/>
<keyword id="KW-0175">Coiled coil</keyword>
<keyword id="KW-1185">Reference proteome</keyword>
<gene>
    <name type="ordered locus">AF_1504</name>
</gene>
<accession>O28768</accession>
<feature type="chain" id="PRO_0000128014" description="Uncharacterized protein AF_1504">
    <location>
        <begin position="1"/>
        <end position="201"/>
    </location>
</feature>
<feature type="coiled-coil region" evidence="1">
    <location>
        <begin position="3"/>
        <end position="43"/>
    </location>
</feature>
<feature type="coiled-coil region" evidence="1">
    <location>
        <begin position="76"/>
        <end position="120"/>
    </location>
</feature>